<reference key="1">
    <citation type="journal article" date="2005" name="Nature">
        <title>The genome of the social amoeba Dictyostelium discoideum.</title>
        <authorList>
            <person name="Eichinger L."/>
            <person name="Pachebat J.A."/>
            <person name="Gloeckner G."/>
            <person name="Rajandream M.A."/>
            <person name="Sucgang R."/>
            <person name="Berriman M."/>
            <person name="Song J."/>
            <person name="Olsen R."/>
            <person name="Szafranski K."/>
            <person name="Xu Q."/>
            <person name="Tunggal B."/>
            <person name="Kummerfeld S."/>
            <person name="Madera M."/>
            <person name="Konfortov B.A."/>
            <person name="Rivero F."/>
            <person name="Bankier A.T."/>
            <person name="Lehmann R."/>
            <person name="Hamlin N."/>
            <person name="Davies R."/>
            <person name="Gaudet P."/>
            <person name="Fey P."/>
            <person name="Pilcher K."/>
            <person name="Chen G."/>
            <person name="Saunders D."/>
            <person name="Sodergren E.J."/>
            <person name="Davis P."/>
            <person name="Kerhornou A."/>
            <person name="Nie X."/>
            <person name="Hall N."/>
            <person name="Anjard C."/>
            <person name="Hemphill L."/>
            <person name="Bason N."/>
            <person name="Farbrother P."/>
            <person name="Desany B."/>
            <person name="Just E."/>
            <person name="Morio T."/>
            <person name="Rost R."/>
            <person name="Churcher C.M."/>
            <person name="Cooper J."/>
            <person name="Haydock S."/>
            <person name="van Driessche N."/>
            <person name="Cronin A."/>
            <person name="Goodhead I."/>
            <person name="Muzny D.M."/>
            <person name="Mourier T."/>
            <person name="Pain A."/>
            <person name="Lu M."/>
            <person name="Harper D."/>
            <person name="Lindsay R."/>
            <person name="Hauser H."/>
            <person name="James K.D."/>
            <person name="Quiles M."/>
            <person name="Madan Babu M."/>
            <person name="Saito T."/>
            <person name="Buchrieser C."/>
            <person name="Wardroper A."/>
            <person name="Felder M."/>
            <person name="Thangavelu M."/>
            <person name="Johnson D."/>
            <person name="Knights A."/>
            <person name="Loulseged H."/>
            <person name="Mungall K.L."/>
            <person name="Oliver K."/>
            <person name="Price C."/>
            <person name="Quail M.A."/>
            <person name="Urushihara H."/>
            <person name="Hernandez J."/>
            <person name="Rabbinowitsch E."/>
            <person name="Steffen D."/>
            <person name="Sanders M."/>
            <person name="Ma J."/>
            <person name="Kohara Y."/>
            <person name="Sharp S."/>
            <person name="Simmonds M.N."/>
            <person name="Spiegler S."/>
            <person name="Tivey A."/>
            <person name="Sugano S."/>
            <person name="White B."/>
            <person name="Walker D."/>
            <person name="Woodward J.R."/>
            <person name="Winckler T."/>
            <person name="Tanaka Y."/>
            <person name="Shaulsky G."/>
            <person name="Schleicher M."/>
            <person name="Weinstock G.M."/>
            <person name="Rosenthal A."/>
            <person name="Cox E.C."/>
            <person name="Chisholm R.L."/>
            <person name="Gibbs R.A."/>
            <person name="Loomis W.F."/>
            <person name="Platzer M."/>
            <person name="Kay R.R."/>
            <person name="Williams J.G."/>
            <person name="Dear P.H."/>
            <person name="Noegel A.A."/>
            <person name="Barrell B.G."/>
            <person name="Kuspa A."/>
        </authorList>
    </citation>
    <scope>NUCLEOTIDE SEQUENCE [LARGE SCALE GENOMIC DNA]</scope>
    <source>
        <strain>AX4</strain>
    </source>
</reference>
<keyword id="KW-0472">Membrane</keyword>
<keyword id="KW-1185">Reference proteome</keyword>
<keyword id="KW-0812">Transmembrane</keyword>
<keyword id="KW-1133">Transmembrane helix</keyword>
<accession>Q54VY0</accession>
<dbReference type="EMBL" id="AAFI02000035">
    <property type="protein sequence ID" value="EAL67262.1"/>
    <property type="molecule type" value="Genomic_DNA"/>
</dbReference>
<dbReference type="RefSeq" id="XP_641225.1">
    <property type="nucleotide sequence ID" value="XM_636133.1"/>
</dbReference>
<dbReference type="SMR" id="Q54VY0"/>
<dbReference type="FunCoup" id="Q54VY0">
    <property type="interactions" value="435"/>
</dbReference>
<dbReference type="PaxDb" id="44689-DDB0206358"/>
<dbReference type="EnsemblProtists" id="EAL67262">
    <property type="protein sequence ID" value="EAL67262"/>
    <property type="gene ID" value="DDB_G0280071"/>
</dbReference>
<dbReference type="GeneID" id="8622356"/>
<dbReference type="KEGG" id="ddi:DDB_G0280071"/>
<dbReference type="dictyBase" id="DDB_G0280071"/>
<dbReference type="VEuPathDB" id="AmoebaDB:DDB_G0280071"/>
<dbReference type="eggNOG" id="ENOG502REID">
    <property type="taxonomic scope" value="Eukaryota"/>
</dbReference>
<dbReference type="HOGENOM" id="CLU_345603_0_0_1"/>
<dbReference type="InParanoid" id="Q54VY0"/>
<dbReference type="OMA" id="YWDIELN"/>
<dbReference type="PRO" id="PR:Q54VY0"/>
<dbReference type="Proteomes" id="UP000002195">
    <property type="component" value="Chromosome 3"/>
</dbReference>
<dbReference type="GO" id="GO:0016020">
    <property type="term" value="C:membrane"/>
    <property type="evidence" value="ECO:0007669"/>
    <property type="project" value="UniProtKB-SubCell"/>
</dbReference>
<dbReference type="InterPro" id="IPR052292">
    <property type="entry name" value="Glucose_repression_reg"/>
</dbReference>
<dbReference type="PANTHER" id="PTHR28051">
    <property type="entry name" value="PROTEIN MTL1-RELATED"/>
    <property type="match status" value="1"/>
</dbReference>
<dbReference type="PANTHER" id="PTHR28051:SF1">
    <property type="entry name" value="PROTEIN MTL1-RELATED"/>
    <property type="match status" value="1"/>
</dbReference>
<sequence length="818" mass="90424">MYNNSNSNNNNGSRKRSSPPLYINNNNSGNYISPPSPLSPKQTNNFLFNNGGFNSFENPQQQSPPQQQQLLFTSPIPTRPQNLYQYIDENELNTGYNNSNNNNNNNNNNNNNNNNNNNNNNNNSNNNNNSNNNNNNKMITTTTTTTTKSNNDYKKKIKKQINFKLDNLHESSEEEEEEQQEEEEEEEEKEELNYINNNNNKNDDDNNSQDEDKEEDKYHETNTDFGLLSVASKEDLMICLNVLKKEMGQFKNLSQNLLSRLQILENGIGQEKMIRLLNNNNNYNMNGSSDSSDSSNSSGHSRNNSDENMIDCYYVTRNNNNNNTNSLLIPPAPPQLQQQQQQQQFYSQDAVMISTYLLEVQKIVEKQRQYDSLLAQREKYWDIELNKITMAILNKLGPNPSTTVDLLNLPMNNMNINKNNNSNNNNNNNNHNYNKNNNNNNNNNNDFSNFNNDDCFYNSNNSCNSEDFDSFTALNNINNSIIRNQSSNSLNLKDDSEETNFNSLKSKTNNIFKRFYIYLFGTKKTITFWKKVAIIAIIVIVWPLIANLTYKFIVYLINKRRLAKTQPFIIGNNNTSNYNSSTAIGKSLKPIKSSILVPSSSSLPSSSSSSSSTSSSSNLLLPSSINNGTNAFKKIKSSLMKKNSDISSGVGNVVSSVASNVVGGSGSGVGAPDFVKAFIQGVSTGDGGSNDNLTNNALSSITNTFGNLNTVANSSIAPSIGSGLIGSSISPSSSSSSSSSANTASNIINNFTPSALSQLNLPGSSSSSSSFSNPVSSIANNFMSDSNRSPSSSSSSSSSTSDSENGMLKLVRNLLTHR</sequence>
<proteinExistence type="predicted"/>
<protein>
    <recommendedName>
        <fullName>Putative uncharacterized protein DDB_G0280071</fullName>
    </recommendedName>
</protein>
<gene>
    <name type="ORF">DDB_G0280071</name>
</gene>
<feature type="chain" id="PRO_0000352463" description="Putative uncharacterized protein DDB_G0280071">
    <location>
        <begin position="1"/>
        <end position="818"/>
    </location>
</feature>
<feature type="transmembrane region" description="Helical" evidence="1">
    <location>
        <begin position="534"/>
        <end position="554"/>
    </location>
</feature>
<feature type="region of interest" description="Disordered" evidence="2">
    <location>
        <begin position="1"/>
        <end position="68"/>
    </location>
</feature>
<feature type="region of interest" description="Disordered" evidence="2">
    <location>
        <begin position="92"/>
        <end position="150"/>
    </location>
</feature>
<feature type="region of interest" description="Disordered" evidence="2">
    <location>
        <begin position="164"/>
        <end position="220"/>
    </location>
</feature>
<feature type="region of interest" description="Disordered" evidence="2">
    <location>
        <begin position="284"/>
        <end position="306"/>
    </location>
</feature>
<feature type="region of interest" description="Disordered" evidence="2">
    <location>
        <begin position="415"/>
        <end position="445"/>
    </location>
</feature>
<feature type="region of interest" description="Disordered" evidence="2">
    <location>
        <begin position="779"/>
        <end position="808"/>
    </location>
</feature>
<feature type="compositionally biased region" description="Low complexity" evidence="2">
    <location>
        <begin position="1"/>
        <end position="33"/>
    </location>
</feature>
<feature type="compositionally biased region" description="Low complexity" evidence="2">
    <location>
        <begin position="44"/>
        <end position="68"/>
    </location>
</feature>
<feature type="compositionally biased region" description="Low complexity" evidence="2">
    <location>
        <begin position="97"/>
        <end position="150"/>
    </location>
</feature>
<feature type="compositionally biased region" description="Acidic residues" evidence="2">
    <location>
        <begin position="172"/>
        <end position="190"/>
    </location>
</feature>
<feature type="compositionally biased region" description="Acidic residues" evidence="2">
    <location>
        <begin position="205"/>
        <end position="214"/>
    </location>
</feature>
<feature type="compositionally biased region" description="Low complexity" evidence="2">
    <location>
        <begin position="284"/>
        <end position="302"/>
    </location>
</feature>
<feature type="compositionally biased region" description="Low complexity" evidence="2">
    <location>
        <begin position="784"/>
        <end position="803"/>
    </location>
</feature>
<evidence type="ECO:0000255" key="1"/>
<evidence type="ECO:0000256" key="2">
    <source>
        <dbReference type="SAM" id="MobiDB-lite"/>
    </source>
</evidence>
<evidence type="ECO:0000305" key="3"/>
<name>Y6358_DICDI</name>
<comment type="subcellular location">
    <subcellularLocation>
        <location evidence="3">Membrane</location>
        <topology evidence="3">Single-pass membrane protein</topology>
    </subcellularLocation>
</comment>
<organism>
    <name type="scientific">Dictyostelium discoideum</name>
    <name type="common">Social amoeba</name>
    <dbReference type="NCBI Taxonomy" id="44689"/>
    <lineage>
        <taxon>Eukaryota</taxon>
        <taxon>Amoebozoa</taxon>
        <taxon>Evosea</taxon>
        <taxon>Eumycetozoa</taxon>
        <taxon>Dictyostelia</taxon>
        <taxon>Dictyosteliales</taxon>
        <taxon>Dictyosteliaceae</taxon>
        <taxon>Dictyostelium</taxon>
    </lineage>
</organism>